<accession>A5VZU3</accession>
<keyword id="KW-0030">Aminoacyl-tRNA synthetase</keyword>
<keyword id="KW-0067">ATP-binding</keyword>
<keyword id="KW-0963">Cytoplasm</keyword>
<keyword id="KW-0436">Ligase</keyword>
<keyword id="KW-0547">Nucleotide-binding</keyword>
<keyword id="KW-0648">Protein biosynthesis</keyword>
<reference key="1">
    <citation type="submission" date="2007-05" db="EMBL/GenBank/DDBJ databases">
        <title>Complete sequence of Pseudomonas putida F1.</title>
        <authorList>
            <consortium name="US DOE Joint Genome Institute"/>
            <person name="Copeland A."/>
            <person name="Lucas S."/>
            <person name="Lapidus A."/>
            <person name="Barry K."/>
            <person name="Detter J.C."/>
            <person name="Glavina del Rio T."/>
            <person name="Hammon N."/>
            <person name="Israni S."/>
            <person name="Dalin E."/>
            <person name="Tice H."/>
            <person name="Pitluck S."/>
            <person name="Chain P."/>
            <person name="Malfatti S."/>
            <person name="Shin M."/>
            <person name="Vergez L."/>
            <person name="Schmutz J."/>
            <person name="Larimer F."/>
            <person name="Land M."/>
            <person name="Hauser L."/>
            <person name="Kyrpides N."/>
            <person name="Lykidis A."/>
            <person name="Parales R."/>
            <person name="Richardson P."/>
        </authorList>
    </citation>
    <scope>NUCLEOTIDE SEQUENCE [LARGE SCALE GENOMIC DNA]</scope>
    <source>
        <strain>ATCC 700007 / DSM 6899 / JCM 31910 / BCRC 17059 / LMG 24140 / F1</strain>
    </source>
</reference>
<proteinExistence type="inferred from homology"/>
<feature type="chain" id="PRO_1000006731" description="Aspartate--tRNA(Asp/Asn) ligase">
    <location>
        <begin position="1"/>
        <end position="591"/>
    </location>
</feature>
<feature type="region of interest" description="Aspartate" evidence="1">
    <location>
        <begin position="198"/>
        <end position="201"/>
    </location>
</feature>
<feature type="binding site" evidence="1">
    <location>
        <position position="174"/>
    </location>
    <ligand>
        <name>L-aspartate</name>
        <dbReference type="ChEBI" id="CHEBI:29991"/>
    </ligand>
</feature>
<feature type="binding site" evidence="1">
    <location>
        <begin position="220"/>
        <end position="222"/>
    </location>
    <ligand>
        <name>ATP</name>
        <dbReference type="ChEBI" id="CHEBI:30616"/>
    </ligand>
</feature>
<feature type="binding site" evidence="1">
    <location>
        <position position="220"/>
    </location>
    <ligand>
        <name>L-aspartate</name>
        <dbReference type="ChEBI" id="CHEBI:29991"/>
    </ligand>
</feature>
<feature type="binding site" evidence="1">
    <location>
        <position position="229"/>
    </location>
    <ligand>
        <name>ATP</name>
        <dbReference type="ChEBI" id="CHEBI:30616"/>
    </ligand>
</feature>
<feature type="binding site" evidence="1">
    <location>
        <position position="450"/>
    </location>
    <ligand>
        <name>L-aspartate</name>
        <dbReference type="ChEBI" id="CHEBI:29991"/>
    </ligand>
</feature>
<feature type="binding site" evidence="1">
    <location>
        <position position="483"/>
    </location>
    <ligand>
        <name>ATP</name>
        <dbReference type="ChEBI" id="CHEBI:30616"/>
    </ligand>
</feature>
<feature type="binding site" evidence="1">
    <location>
        <position position="490"/>
    </location>
    <ligand>
        <name>L-aspartate</name>
        <dbReference type="ChEBI" id="CHEBI:29991"/>
    </ligand>
</feature>
<feature type="binding site" evidence="1">
    <location>
        <begin position="535"/>
        <end position="538"/>
    </location>
    <ligand>
        <name>ATP</name>
        <dbReference type="ChEBI" id="CHEBI:30616"/>
    </ligand>
</feature>
<feature type="site" description="Important for tRNA non-discrimination" evidence="1">
    <location>
        <position position="31"/>
    </location>
</feature>
<feature type="site" description="Important for tRNA non-discrimination" evidence="1">
    <location>
        <position position="82"/>
    </location>
</feature>
<evidence type="ECO:0000255" key="1">
    <source>
        <dbReference type="HAMAP-Rule" id="MF_00044"/>
    </source>
</evidence>
<sequence length="591" mass="66568">MMRSHYCGQLNESLDGQEVTLCGWVHRRRDHGGVIFLDIRDREGMAQVVFDPDRAETFAAADRVRSEYVVQITGKVRKRPEGAVNANMASGAIEILGYQLNVLNEAETPPFPLNEYSDVGEETRLRYRFIDLRRPEMADKLRLRSRITSSIRRFLDENGFLDVETPILTRATPEGARDYLVPSRTHAGSFFALPQSPQLFKQLLMVAGFDRYYQIAKCFRDEDLRADRQPEFTQIDIETSFLDESEIMGLTESMIRKLFKEVLDLEFGEFPHMTFEEAMRRYGSDKPDLRIPLELVDVADQLKDVDFKVFAGPANDPKCRVTALRLPGGASMPRSKIDEYTKFVGIYGAKGLAYIKVNERAKGVEGLQSPIVKNIPEANLNNILDRVGAVDGDIVFFGADKFKVVSEALGALRIRLGHDFELLTCEWAPMWVVDFPMFEENEDGSFTALHHPFTAPKCTPEELEANPATALSRAYDMVLNGTELGGGSIRIHRKEMQQAVFRLLGIEAEEQEEKFGFLLDALKFGAPPHGGLAFGLDRLVMLMTGAQSIREVIAFPKTQSAACVMTQAPGMVDAKALRELHIRLREQTKVE</sequence>
<dbReference type="EC" id="6.1.1.23" evidence="1"/>
<dbReference type="EMBL" id="CP000712">
    <property type="protein sequence ID" value="ABQ77403.1"/>
    <property type="molecule type" value="Genomic_DNA"/>
</dbReference>
<dbReference type="SMR" id="A5VZU3"/>
<dbReference type="KEGG" id="ppf:Pput_1242"/>
<dbReference type="eggNOG" id="COG0173">
    <property type="taxonomic scope" value="Bacteria"/>
</dbReference>
<dbReference type="HOGENOM" id="CLU_014330_3_2_6"/>
<dbReference type="GO" id="GO:0005737">
    <property type="term" value="C:cytoplasm"/>
    <property type="evidence" value="ECO:0007669"/>
    <property type="project" value="UniProtKB-SubCell"/>
</dbReference>
<dbReference type="GO" id="GO:0004815">
    <property type="term" value="F:aspartate-tRNA ligase activity"/>
    <property type="evidence" value="ECO:0007669"/>
    <property type="project" value="UniProtKB-UniRule"/>
</dbReference>
<dbReference type="GO" id="GO:0050560">
    <property type="term" value="F:aspartate-tRNA(Asn) ligase activity"/>
    <property type="evidence" value="ECO:0007669"/>
    <property type="project" value="UniProtKB-EC"/>
</dbReference>
<dbReference type="GO" id="GO:0005524">
    <property type="term" value="F:ATP binding"/>
    <property type="evidence" value="ECO:0007669"/>
    <property type="project" value="UniProtKB-UniRule"/>
</dbReference>
<dbReference type="GO" id="GO:0003676">
    <property type="term" value="F:nucleic acid binding"/>
    <property type="evidence" value="ECO:0007669"/>
    <property type="project" value="InterPro"/>
</dbReference>
<dbReference type="GO" id="GO:0006422">
    <property type="term" value="P:aspartyl-tRNA aminoacylation"/>
    <property type="evidence" value="ECO:0007669"/>
    <property type="project" value="UniProtKB-UniRule"/>
</dbReference>
<dbReference type="CDD" id="cd00777">
    <property type="entry name" value="AspRS_core"/>
    <property type="match status" value="1"/>
</dbReference>
<dbReference type="CDD" id="cd04317">
    <property type="entry name" value="EcAspRS_like_N"/>
    <property type="match status" value="1"/>
</dbReference>
<dbReference type="Gene3D" id="3.30.930.10">
    <property type="entry name" value="Bira Bifunctional Protein, Domain 2"/>
    <property type="match status" value="1"/>
</dbReference>
<dbReference type="Gene3D" id="3.30.1360.30">
    <property type="entry name" value="GAD-like domain"/>
    <property type="match status" value="1"/>
</dbReference>
<dbReference type="Gene3D" id="2.40.50.140">
    <property type="entry name" value="Nucleic acid-binding proteins"/>
    <property type="match status" value="1"/>
</dbReference>
<dbReference type="HAMAP" id="MF_00044">
    <property type="entry name" value="Asp_tRNA_synth_type1"/>
    <property type="match status" value="1"/>
</dbReference>
<dbReference type="InterPro" id="IPR004364">
    <property type="entry name" value="Aa-tRNA-synt_II"/>
</dbReference>
<dbReference type="InterPro" id="IPR006195">
    <property type="entry name" value="aa-tRNA-synth_II"/>
</dbReference>
<dbReference type="InterPro" id="IPR045864">
    <property type="entry name" value="aa-tRNA-synth_II/BPL/LPL"/>
</dbReference>
<dbReference type="InterPro" id="IPR004524">
    <property type="entry name" value="Asp-tRNA-ligase_1"/>
</dbReference>
<dbReference type="InterPro" id="IPR047089">
    <property type="entry name" value="Asp-tRNA-ligase_1_N"/>
</dbReference>
<dbReference type="InterPro" id="IPR002312">
    <property type="entry name" value="Asp/Asn-tRNA-synth_IIb"/>
</dbReference>
<dbReference type="InterPro" id="IPR047090">
    <property type="entry name" value="AspRS_core"/>
</dbReference>
<dbReference type="InterPro" id="IPR004115">
    <property type="entry name" value="GAD-like_sf"/>
</dbReference>
<dbReference type="InterPro" id="IPR029351">
    <property type="entry name" value="GAD_dom"/>
</dbReference>
<dbReference type="InterPro" id="IPR012340">
    <property type="entry name" value="NA-bd_OB-fold"/>
</dbReference>
<dbReference type="InterPro" id="IPR004365">
    <property type="entry name" value="NA-bd_OB_tRNA"/>
</dbReference>
<dbReference type="NCBIfam" id="TIGR00459">
    <property type="entry name" value="aspS_bact"/>
    <property type="match status" value="1"/>
</dbReference>
<dbReference type="NCBIfam" id="NF001750">
    <property type="entry name" value="PRK00476.1"/>
    <property type="match status" value="1"/>
</dbReference>
<dbReference type="PANTHER" id="PTHR22594:SF5">
    <property type="entry name" value="ASPARTATE--TRNA LIGASE, MITOCHONDRIAL"/>
    <property type="match status" value="1"/>
</dbReference>
<dbReference type="PANTHER" id="PTHR22594">
    <property type="entry name" value="ASPARTYL/LYSYL-TRNA SYNTHETASE"/>
    <property type="match status" value="1"/>
</dbReference>
<dbReference type="Pfam" id="PF02938">
    <property type="entry name" value="GAD"/>
    <property type="match status" value="1"/>
</dbReference>
<dbReference type="Pfam" id="PF00152">
    <property type="entry name" value="tRNA-synt_2"/>
    <property type="match status" value="1"/>
</dbReference>
<dbReference type="Pfam" id="PF01336">
    <property type="entry name" value="tRNA_anti-codon"/>
    <property type="match status" value="1"/>
</dbReference>
<dbReference type="PRINTS" id="PR01042">
    <property type="entry name" value="TRNASYNTHASP"/>
</dbReference>
<dbReference type="SUPFAM" id="SSF55681">
    <property type="entry name" value="Class II aaRS and biotin synthetases"/>
    <property type="match status" value="1"/>
</dbReference>
<dbReference type="SUPFAM" id="SSF55261">
    <property type="entry name" value="GAD domain-like"/>
    <property type="match status" value="1"/>
</dbReference>
<dbReference type="SUPFAM" id="SSF50249">
    <property type="entry name" value="Nucleic acid-binding proteins"/>
    <property type="match status" value="1"/>
</dbReference>
<dbReference type="PROSITE" id="PS50862">
    <property type="entry name" value="AA_TRNA_LIGASE_II"/>
    <property type="match status" value="1"/>
</dbReference>
<comment type="function">
    <text evidence="1">Aspartyl-tRNA synthetase with relaxed tRNA specificity since it is able to aspartylate not only its cognate tRNA(Asp) but also tRNA(Asn). Reaction proceeds in two steps: L-aspartate is first activated by ATP to form Asp-AMP and then transferred to the acceptor end of tRNA(Asp/Asn).</text>
</comment>
<comment type="catalytic activity">
    <reaction evidence="1">
        <text>tRNA(Asx) + L-aspartate + ATP = L-aspartyl-tRNA(Asx) + AMP + diphosphate</text>
        <dbReference type="Rhea" id="RHEA:18349"/>
        <dbReference type="Rhea" id="RHEA-COMP:9710"/>
        <dbReference type="Rhea" id="RHEA-COMP:9711"/>
        <dbReference type="ChEBI" id="CHEBI:29991"/>
        <dbReference type="ChEBI" id="CHEBI:30616"/>
        <dbReference type="ChEBI" id="CHEBI:33019"/>
        <dbReference type="ChEBI" id="CHEBI:78442"/>
        <dbReference type="ChEBI" id="CHEBI:78516"/>
        <dbReference type="ChEBI" id="CHEBI:456215"/>
        <dbReference type="EC" id="6.1.1.23"/>
    </reaction>
</comment>
<comment type="subunit">
    <text evidence="1">Homodimer.</text>
</comment>
<comment type="subcellular location">
    <subcellularLocation>
        <location evidence="1">Cytoplasm</location>
    </subcellularLocation>
</comment>
<comment type="similarity">
    <text evidence="1">Belongs to the class-II aminoacyl-tRNA synthetase family. Type 1 subfamily.</text>
</comment>
<gene>
    <name evidence="1" type="primary">aspS</name>
    <name type="ordered locus">Pput_1242</name>
</gene>
<organism>
    <name type="scientific">Pseudomonas putida (strain ATCC 700007 / DSM 6899 / JCM 31910 / BCRC 17059 / LMG 24140 / F1)</name>
    <dbReference type="NCBI Taxonomy" id="351746"/>
    <lineage>
        <taxon>Bacteria</taxon>
        <taxon>Pseudomonadati</taxon>
        <taxon>Pseudomonadota</taxon>
        <taxon>Gammaproteobacteria</taxon>
        <taxon>Pseudomonadales</taxon>
        <taxon>Pseudomonadaceae</taxon>
        <taxon>Pseudomonas</taxon>
    </lineage>
</organism>
<protein>
    <recommendedName>
        <fullName evidence="1">Aspartate--tRNA(Asp/Asn) ligase</fullName>
        <ecNumber evidence="1">6.1.1.23</ecNumber>
    </recommendedName>
    <alternativeName>
        <fullName evidence="1">Aspartyl-tRNA synthetase</fullName>
        <shortName evidence="1">AspRS</shortName>
    </alternativeName>
    <alternativeName>
        <fullName evidence="1">Non-discriminating aspartyl-tRNA synthetase</fullName>
        <shortName evidence="1">ND-AspRS</shortName>
    </alternativeName>
</protein>
<name>SYDND_PSEP1</name>